<gene>
    <name evidence="1" type="primary">groEL</name>
    <name evidence="1" type="synonym">groL</name>
    <name type="ordered locus">BCc_011</name>
</gene>
<reference key="1">
    <citation type="journal article" date="2006" name="Science">
        <title>A small microbial genome: the end of a long symbiotic relationship?</title>
        <authorList>
            <person name="Perez-Brocal V."/>
            <person name="Gil R."/>
            <person name="Ramos S."/>
            <person name="Lamelas A."/>
            <person name="Postigo M."/>
            <person name="Michelena J.M."/>
            <person name="Silva F.J."/>
            <person name="Moya A."/>
            <person name="Latorre A."/>
        </authorList>
    </citation>
    <scope>NUCLEOTIDE SEQUENCE [LARGE SCALE GENOMIC DNA]</scope>
    <source>
        <strain>Cc</strain>
    </source>
</reference>
<proteinExistence type="inferred from homology"/>
<dbReference type="EC" id="5.6.1.7" evidence="1"/>
<dbReference type="EMBL" id="CP000263">
    <property type="protein sequence ID" value="ABJ90496.1"/>
    <property type="molecule type" value="Genomic_DNA"/>
</dbReference>
<dbReference type="RefSeq" id="WP_011672415.1">
    <property type="nucleotide sequence ID" value="NC_008513.1"/>
</dbReference>
<dbReference type="SMR" id="Q058F3"/>
<dbReference type="STRING" id="372461.BCc_011"/>
<dbReference type="KEGG" id="bcc:BCc_011"/>
<dbReference type="eggNOG" id="COG0459">
    <property type="taxonomic scope" value="Bacteria"/>
</dbReference>
<dbReference type="HOGENOM" id="CLU_016503_3_0_6"/>
<dbReference type="OrthoDB" id="9766614at2"/>
<dbReference type="Proteomes" id="UP000000669">
    <property type="component" value="Chromosome"/>
</dbReference>
<dbReference type="GO" id="GO:0005737">
    <property type="term" value="C:cytoplasm"/>
    <property type="evidence" value="ECO:0007669"/>
    <property type="project" value="UniProtKB-SubCell"/>
</dbReference>
<dbReference type="GO" id="GO:0005524">
    <property type="term" value="F:ATP binding"/>
    <property type="evidence" value="ECO:0007669"/>
    <property type="project" value="UniProtKB-UniRule"/>
</dbReference>
<dbReference type="GO" id="GO:0140662">
    <property type="term" value="F:ATP-dependent protein folding chaperone"/>
    <property type="evidence" value="ECO:0007669"/>
    <property type="project" value="InterPro"/>
</dbReference>
<dbReference type="GO" id="GO:0016853">
    <property type="term" value="F:isomerase activity"/>
    <property type="evidence" value="ECO:0007669"/>
    <property type="project" value="UniProtKB-KW"/>
</dbReference>
<dbReference type="GO" id="GO:0051082">
    <property type="term" value="F:unfolded protein binding"/>
    <property type="evidence" value="ECO:0007669"/>
    <property type="project" value="UniProtKB-UniRule"/>
</dbReference>
<dbReference type="GO" id="GO:0042026">
    <property type="term" value="P:protein refolding"/>
    <property type="evidence" value="ECO:0007669"/>
    <property type="project" value="UniProtKB-UniRule"/>
</dbReference>
<dbReference type="CDD" id="cd03344">
    <property type="entry name" value="GroEL"/>
    <property type="match status" value="1"/>
</dbReference>
<dbReference type="FunFam" id="1.10.560.10:FF:000001">
    <property type="entry name" value="60 kDa chaperonin"/>
    <property type="match status" value="1"/>
</dbReference>
<dbReference type="FunFam" id="3.50.7.10:FF:000001">
    <property type="entry name" value="60 kDa chaperonin"/>
    <property type="match status" value="1"/>
</dbReference>
<dbReference type="Gene3D" id="3.50.7.10">
    <property type="entry name" value="GroEL"/>
    <property type="match status" value="1"/>
</dbReference>
<dbReference type="Gene3D" id="1.10.560.10">
    <property type="entry name" value="GroEL-like equatorial domain"/>
    <property type="match status" value="1"/>
</dbReference>
<dbReference type="Gene3D" id="3.30.260.10">
    <property type="entry name" value="TCP-1-like chaperonin intermediate domain"/>
    <property type="match status" value="1"/>
</dbReference>
<dbReference type="HAMAP" id="MF_00600">
    <property type="entry name" value="CH60"/>
    <property type="match status" value="1"/>
</dbReference>
<dbReference type="InterPro" id="IPR018370">
    <property type="entry name" value="Chaperonin_Cpn60_CS"/>
</dbReference>
<dbReference type="InterPro" id="IPR001844">
    <property type="entry name" value="Cpn60/GroEL"/>
</dbReference>
<dbReference type="InterPro" id="IPR002423">
    <property type="entry name" value="Cpn60/GroEL/TCP-1"/>
</dbReference>
<dbReference type="InterPro" id="IPR027409">
    <property type="entry name" value="GroEL-like_apical_dom_sf"/>
</dbReference>
<dbReference type="InterPro" id="IPR027413">
    <property type="entry name" value="GROEL-like_equatorial_sf"/>
</dbReference>
<dbReference type="InterPro" id="IPR027410">
    <property type="entry name" value="TCP-1-like_intermed_sf"/>
</dbReference>
<dbReference type="NCBIfam" id="TIGR02348">
    <property type="entry name" value="GroEL"/>
    <property type="match status" value="1"/>
</dbReference>
<dbReference type="NCBIfam" id="NF000592">
    <property type="entry name" value="PRK00013.1"/>
    <property type="match status" value="1"/>
</dbReference>
<dbReference type="NCBIfam" id="NF009487">
    <property type="entry name" value="PRK12849.1"/>
    <property type="match status" value="1"/>
</dbReference>
<dbReference type="NCBIfam" id="NF009488">
    <property type="entry name" value="PRK12850.1"/>
    <property type="match status" value="1"/>
</dbReference>
<dbReference type="NCBIfam" id="NF009489">
    <property type="entry name" value="PRK12851.1"/>
    <property type="match status" value="1"/>
</dbReference>
<dbReference type="PANTHER" id="PTHR45633">
    <property type="entry name" value="60 KDA HEAT SHOCK PROTEIN, MITOCHONDRIAL"/>
    <property type="match status" value="1"/>
</dbReference>
<dbReference type="Pfam" id="PF00118">
    <property type="entry name" value="Cpn60_TCP1"/>
    <property type="match status" value="1"/>
</dbReference>
<dbReference type="PRINTS" id="PR00298">
    <property type="entry name" value="CHAPERONIN60"/>
</dbReference>
<dbReference type="SUPFAM" id="SSF52029">
    <property type="entry name" value="GroEL apical domain-like"/>
    <property type="match status" value="1"/>
</dbReference>
<dbReference type="SUPFAM" id="SSF48592">
    <property type="entry name" value="GroEL equatorial domain-like"/>
    <property type="match status" value="1"/>
</dbReference>
<dbReference type="SUPFAM" id="SSF54849">
    <property type="entry name" value="GroEL-intermediate domain like"/>
    <property type="match status" value="1"/>
</dbReference>
<dbReference type="PROSITE" id="PS00296">
    <property type="entry name" value="CHAPERONINS_CPN60"/>
    <property type="match status" value="1"/>
</dbReference>
<sequence>MAAKDVKFGNEARIKMLHGVNVLADAVKVTLGPKGRNVVLDKSFGPPSITKDGVSVAREIELEDKFENMGAQMVKEVASKANDAAGDGTTTATLLAQSIVNEGLKAVAAGMNPMDLKRGIDKAVIDAVDELKKLSVPCADSKAITQVGTISANADEKVGSLIAEAMEKVGNDGVITVEEGTGLQNELEVVKGMQFDRGYLSPYFINQPETGLVELENPYILMVDKKISNIRELLPILEAVAKSSKPLLIISEDLEGEALATLVVNSMRGIVKVAAVKAPGFGDRRKAMLQDISILTGGSVISEELAMDLEKSSLEDLGQAKRVVINKDTTTIIDGNGNKEAIKSRISQIRQEINEATSDYDKEKLNERLAKLSGGVAVLKVGAATEVEMKEKKARVEDALHATRAAVEEGVVPGGGVALVRVAEKISRINGQNEDQNVGIRVALRAMEAPLRQIVANSGEEPSVVTNNVKDGHGNYGYNAATDEYGDMISFGILDPTKVTRSALQYAASVAGLMITTECMVTDLPKDEKSSSELNSAPGNGMGGGMGGMM</sequence>
<comment type="function">
    <text evidence="1">Together with its co-chaperonin GroES, plays an essential role in assisting protein folding. The GroEL-GroES system forms a nano-cage that allows encapsulation of the non-native substrate proteins and provides a physical environment optimized to promote and accelerate protein folding.</text>
</comment>
<comment type="catalytic activity">
    <reaction evidence="1">
        <text>ATP + H2O + a folded polypeptide = ADP + phosphate + an unfolded polypeptide.</text>
        <dbReference type="EC" id="5.6.1.7"/>
    </reaction>
</comment>
<comment type="subunit">
    <text evidence="1">Forms a cylinder of 14 subunits composed of two heptameric rings stacked back-to-back. Interacts with the co-chaperonin GroES.</text>
</comment>
<comment type="subcellular location">
    <subcellularLocation>
        <location evidence="1">Cytoplasm</location>
    </subcellularLocation>
</comment>
<comment type="similarity">
    <text evidence="1">Belongs to the chaperonin (HSP60) family.</text>
</comment>
<keyword id="KW-0067">ATP-binding</keyword>
<keyword id="KW-0143">Chaperone</keyword>
<keyword id="KW-0963">Cytoplasm</keyword>
<keyword id="KW-0413">Isomerase</keyword>
<keyword id="KW-0547">Nucleotide-binding</keyword>
<keyword id="KW-1185">Reference proteome</keyword>
<name>CH60_BUCCC</name>
<evidence type="ECO:0000255" key="1">
    <source>
        <dbReference type="HAMAP-Rule" id="MF_00600"/>
    </source>
</evidence>
<evidence type="ECO:0000256" key="2">
    <source>
        <dbReference type="SAM" id="MobiDB-lite"/>
    </source>
</evidence>
<accession>Q058F3</accession>
<protein>
    <recommendedName>
        <fullName evidence="1">Chaperonin GroEL</fullName>
        <ecNumber evidence="1">5.6.1.7</ecNumber>
    </recommendedName>
    <alternativeName>
        <fullName evidence="1">60 kDa chaperonin</fullName>
    </alternativeName>
    <alternativeName>
        <fullName evidence="1">Chaperonin-60</fullName>
        <shortName evidence="1">Cpn60</shortName>
    </alternativeName>
</protein>
<organism>
    <name type="scientific">Buchnera aphidicola subsp. Cinara cedri (strain Cc)</name>
    <dbReference type="NCBI Taxonomy" id="372461"/>
    <lineage>
        <taxon>Bacteria</taxon>
        <taxon>Pseudomonadati</taxon>
        <taxon>Pseudomonadota</taxon>
        <taxon>Gammaproteobacteria</taxon>
        <taxon>Enterobacterales</taxon>
        <taxon>Erwiniaceae</taxon>
        <taxon>Buchnera</taxon>
    </lineage>
</organism>
<feature type="chain" id="PRO_1000025757" description="Chaperonin GroEL">
    <location>
        <begin position="1"/>
        <end position="550"/>
    </location>
</feature>
<feature type="region of interest" description="Disordered" evidence="2">
    <location>
        <begin position="525"/>
        <end position="550"/>
    </location>
</feature>
<feature type="compositionally biased region" description="Gly residues" evidence="2">
    <location>
        <begin position="540"/>
        <end position="550"/>
    </location>
</feature>
<feature type="binding site" evidence="1">
    <location>
        <begin position="30"/>
        <end position="33"/>
    </location>
    <ligand>
        <name>ATP</name>
        <dbReference type="ChEBI" id="CHEBI:30616"/>
    </ligand>
</feature>
<feature type="binding site" evidence="1">
    <location>
        <position position="51"/>
    </location>
    <ligand>
        <name>ATP</name>
        <dbReference type="ChEBI" id="CHEBI:30616"/>
    </ligand>
</feature>
<feature type="binding site" evidence="1">
    <location>
        <begin position="87"/>
        <end position="91"/>
    </location>
    <ligand>
        <name>ATP</name>
        <dbReference type="ChEBI" id="CHEBI:30616"/>
    </ligand>
</feature>
<feature type="binding site" evidence="1">
    <location>
        <position position="415"/>
    </location>
    <ligand>
        <name>ATP</name>
        <dbReference type="ChEBI" id="CHEBI:30616"/>
    </ligand>
</feature>
<feature type="binding site" evidence="1">
    <location>
        <begin position="479"/>
        <end position="481"/>
    </location>
    <ligand>
        <name>ATP</name>
        <dbReference type="ChEBI" id="CHEBI:30616"/>
    </ligand>
</feature>
<feature type="binding site" evidence="1">
    <location>
        <position position="495"/>
    </location>
    <ligand>
        <name>ATP</name>
        <dbReference type="ChEBI" id="CHEBI:30616"/>
    </ligand>
</feature>